<protein>
    <recommendedName>
        <fullName>Interferon gamma</fullName>
        <shortName>IFN-gamma</shortName>
    </recommendedName>
</protein>
<feature type="signal peptide" evidence="1">
    <location>
        <begin position="1"/>
        <end position="23"/>
    </location>
</feature>
<feature type="chain" id="PRO_0000253751" description="Interferon gamma">
    <location>
        <begin position="24"/>
        <end position="174"/>
    </location>
</feature>
<feature type="modified residue" description="Pyrrolidone carboxylic acid" evidence="2">
    <location>
        <position position="24"/>
    </location>
</feature>
<feature type="glycosylation site" description="N-linked (GlcNAc...) asparagine" evidence="4">
    <location>
        <position position="39"/>
    </location>
</feature>
<feature type="glycosylation site" description="N-linked (GlcNAc...) asparagine" evidence="4">
    <location>
        <position position="106"/>
    </location>
</feature>
<keyword id="KW-0051">Antiviral defense</keyword>
<keyword id="KW-0202">Cytokine</keyword>
<keyword id="KW-0325">Glycoprotein</keyword>
<keyword id="KW-0341">Growth regulation</keyword>
<keyword id="KW-0873">Pyrrolidone carboxylic acid</keyword>
<keyword id="KW-0964">Secreted</keyword>
<keyword id="KW-0732">Signal</keyword>
<sequence>MNSTRCILALLLCLTQAMSGCYGQGSLIEEIENLKEYFNSSSLDVGKGGDLLFNILMSWQKDGDTKIIESQIVSFYFKLFEALKGNQAIQRSIDTIKADLFVKFFNSSMEKLNDFVKLTKIPVNDPQVQRKAVNELLSVMPHLSPKLSLRKRKRSRCCFGGGNRPVKNNLASTI</sequence>
<proteinExistence type="evidence at transcript level"/>
<gene>
    <name type="primary">IFNG</name>
</gene>
<accession>Q5CCK0</accession>
<dbReference type="EMBL" id="AB206663">
    <property type="protein sequence ID" value="BAD91009.1"/>
    <property type="molecule type" value="mRNA"/>
</dbReference>
<dbReference type="SMR" id="Q5CCK0"/>
<dbReference type="GlyCosmos" id="Q5CCK0">
    <property type="glycosylation" value="2 sites, No reported glycans"/>
</dbReference>
<dbReference type="GO" id="GO:0005615">
    <property type="term" value="C:extracellular space"/>
    <property type="evidence" value="ECO:0007669"/>
    <property type="project" value="UniProtKB-KW"/>
</dbReference>
<dbReference type="GO" id="GO:0005125">
    <property type="term" value="F:cytokine activity"/>
    <property type="evidence" value="ECO:0007669"/>
    <property type="project" value="UniProtKB-KW"/>
</dbReference>
<dbReference type="GO" id="GO:0005133">
    <property type="term" value="F:type II interferon receptor binding"/>
    <property type="evidence" value="ECO:0007669"/>
    <property type="project" value="InterPro"/>
</dbReference>
<dbReference type="GO" id="GO:0002250">
    <property type="term" value="P:adaptive immune response"/>
    <property type="evidence" value="ECO:0007669"/>
    <property type="project" value="TreeGrafter"/>
</dbReference>
<dbReference type="GO" id="GO:0051607">
    <property type="term" value="P:defense response to virus"/>
    <property type="evidence" value="ECO:0007669"/>
    <property type="project" value="UniProtKB-KW"/>
</dbReference>
<dbReference type="GO" id="GO:0006959">
    <property type="term" value="P:humoral immune response"/>
    <property type="evidence" value="ECO:0007669"/>
    <property type="project" value="TreeGrafter"/>
</dbReference>
<dbReference type="FunFam" id="1.20.1250.10:FF:000007">
    <property type="entry name" value="Interferon gamma"/>
    <property type="match status" value="1"/>
</dbReference>
<dbReference type="Gene3D" id="1.20.1250.10">
    <property type="match status" value="1"/>
</dbReference>
<dbReference type="InterPro" id="IPR009079">
    <property type="entry name" value="4_helix_cytokine-like_core"/>
</dbReference>
<dbReference type="InterPro" id="IPR002069">
    <property type="entry name" value="Interferon_gamma"/>
</dbReference>
<dbReference type="PANTHER" id="PTHR11419">
    <property type="entry name" value="INTERFERON GAMMA"/>
    <property type="match status" value="1"/>
</dbReference>
<dbReference type="PANTHER" id="PTHR11419:SF0">
    <property type="entry name" value="INTERFERON GAMMA"/>
    <property type="match status" value="1"/>
</dbReference>
<dbReference type="Pfam" id="PF00714">
    <property type="entry name" value="IFN-gamma"/>
    <property type="match status" value="1"/>
</dbReference>
<dbReference type="PIRSF" id="PIRSF001936">
    <property type="entry name" value="IFN-gamma"/>
    <property type="match status" value="1"/>
</dbReference>
<dbReference type="SUPFAM" id="SSF47266">
    <property type="entry name" value="4-helical cytokines"/>
    <property type="match status" value="1"/>
</dbReference>
<name>IFNG_PHOSU</name>
<organism>
    <name type="scientific">Phodopus sungorus</name>
    <name type="common">Striped hairy-footed hamster</name>
    <name type="synonym">Djungarian hamster</name>
    <dbReference type="NCBI Taxonomy" id="10044"/>
    <lineage>
        <taxon>Eukaryota</taxon>
        <taxon>Metazoa</taxon>
        <taxon>Chordata</taxon>
        <taxon>Craniata</taxon>
        <taxon>Vertebrata</taxon>
        <taxon>Euteleostomi</taxon>
        <taxon>Mammalia</taxon>
        <taxon>Eutheria</taxon>
        <taxon>Euarchontoglires</taxon>
        <taxon>Glires</taxon>
        <taxon>Rodentia</taxon>
        <taxon>Myomorpha</taxon>
        <taxon>Muroidea</taxon>
        <taxon>Cricetidae</taxon>
        <taxon>Cricetinae</taxon>
        <taxon>Phodopus</taxon>
    </lineage>
</organism>
<reference key="1">
    <citation type="journal article" date="2003" name="J. Vet. Med. Sci.">
        <title>Molecular cloning and sequences of Djungarian (Phodopus sungorus) and Chinese (Cricetulus griseus) hamster interferon-gammas.</title>
        <authorList>
            <person name="Ike K."/>
            <person name="Uchida Y."/>
            <person name="Morita T."/>
            <person name="Imai S."/>
        </authorList>
    </citation>
    <scope>NUCLEOTIDE SEQUENCE [MRNA]</scope>
</reference>
<evidence type="ECO:0000250" key="1"/>
<evidence type="ECO:0000250" key="2">
    <source>
        <dbReference type="UniProtKB" id="P01579"/>
    </source>
</evidence>
<evidence type="ECO:0000250" key="3">
    <source>
        <dbReference type="UniProtKB" id="P01580"/>
    </source>
</evidence>
<evidence type="ECO:0000255" key="4"/>
<evidence type="ECO:0000305" key="5"/>
<comment type="function">
    <text evidence="2 3">Type II interferon produced by immune cells such as T-cells and NK cells that plays crucial roles in antimicrobial, antiviral, and antitumor responses by activating effector immune cells and enhancing antigen presentation. Primarily signals through the JAK-STAT pathway after interaction with its receptor IFNGR1 to affect gene regulation. Upon IFNG binding, IFNGR1 intracellular domain opens out to allow association of downstream signaling components JAK2, JAK1 and STAT1, leading to STAT1 activation, nuclear translocation and transcription of IFNG-regulated genes. Many of the induced genes are transcription factors such as IRF1 that are able to further drive regulation of a next wave of transcription. Plays a role in class I antigen presentation pathway by inducing a replacement of catalytic proteasome subunits with immunoproteasome subunits. In turn, increases the quantity, quality, and repertoire of peptides for class I MHC loading. Increases the efficiency of peptide generation also by inducing the expression of activator PA28 that associates with the proteasome and alters its proteolytic cleavage preference. Up-regulates as well MHC II complexes on the cell surface by promoting expression of several key molecules such as cathepsins B/CTSB, H/CTSH, and L/CTSL (By similarity). Participates in the regulation of hematopoietic stem cells during development and under homeostatic conditions by affecting their development, quiescence, and differentiation (By similarity).</text>
</comment>
<comment type="subunit">
    <text evidence="2">Homodimer. Interacts with IFNGR1 (via extracellular domain); this interaction promotes IFNGR1 dimerization.</text>
</comment>
<comment type="subcellular location">
    <subcellularLocation>
        <location evidence="2">Secreted</location>
    </subcellularLocation>
</comment>
<comment type="tissue specificity">
    <text>Released primarily from activated T lymphocytes.</text>
</comment>
<comment type="similarity">
    <text evidence="5">Belongs to the type II (or gamma) interferon family.</text>
</comment>